<organism>
    <name type="scientific">Oceanobacillus iheyensis (strain DSM 14371 / CIP 107618 / JCM 11309 / KCTC 3954 / HTE831)</name>
    <dbReference type="NCBI Taxonomy" id="221109"/>
    <lineage>
        <taxon>Bacteria</taxon>
        <taxon>Bacillati</taxon>
        <taxon>Bacillota</taxon>
        <taxon>Bacilli</taxon>
        <taxon>Bacillales</taxon>
        <taxon>Bacillaceae</taxon>
        <taxon>Oceanobacillus</taxon>
    </lineage>
</organism>
<sequence length="146" mass="15730">MKLHELKAAEGTRKERNRVGRGMSSGNGKTSGRGHKGQKARSGGGVRPGFEGGQMPLFQRLPKRGFTNVNRKEYAIVNLDTLNRFEEGTEITPELLLETGVVSKLNAGIKILGKGTLEKKLTVKAHKFSASAKEAIETAGGQSEVI</sequence>
<feature type="chain" id="PRO_0000104773" description="Large ribosomal subunit protein uL15">
    <location>
        <begin position="1"/>
        <end position="146"/>
    </location>
</feature>
<feature type="region of interest" description="Disordered" evidence="2">
    <location>
        <begin position="1"/>
        <end position="58"/>
    </location>
</feature>
<feature type="compositionally biased region" description="Basic and acidic residues" evidence="2">
    <location>
        <begin position="1"/>
        <end position="18"/>
    </location>
</feature>
<feature type="compositionally biased region" description="Gly residues" evidence="2">
    <location>
        <begin position="42"/>
        <end position="52"/>
    </location>
</feature>
<evidence type="ECO:0000255" key="1">
    <source>
        <dbReference type="HAMAP-Rule" id="MF_01341"/>
    </source>
</evidence>
<evidence type="ECO:0000256" key="2">
    <source>
        <dbReference type="SAM" id="MobiDB-lite"/>
    </source>
</evidence>
<evidence type="ECO:0000305" key="3"/>
<accession>Q8ETW5</accession>
<reference key="1">
    <citation type="journal article" date="2002" name="Nucleic Acids Res.">
        <title>Genome sequence of Oceanobacillus iheyensis isolated from the Iheya Ridge and its unexpected adaptive capabilities to extreme environments.</title>
        <authorList>
            <person name="Takami H."/>
            <person name="Takaki Y."/>
            <person name="Uchiyama I."/>
        </authorList>
    </citation>
    <scope>NUCLEOTIDE SEQUENCE [LARGE SCALE GENOMIC DNA]</scope>
    <source>
        <strain>DSM 14371 / CIP 107618 / JCM 11309 / KCTC 3954 / HTE831</strain>
    </source>
</reference>
<proteinExistence type="inferred from homology"/>
<comment type="function">
    <text evidence="1">Binds to the 23S rRNA.</text>
</comment>
<comment type="subunit">
    <text evidence="1">Part of the 50S ribosomal subunit.</text>
</comment>
<comment type="similarity">
    <text evidence="1">Belongs to the universal ribosomal protein uL15 family.</text>
</comment>
<name>RL15_OCEIH</name>
<protein>
    <recommendedName>
        <fullName evidence="1">Large ribosomal subunit protein uL15</fullName>
    </recommendedName>
    <alternativeName>
        <fullName evidence="3">50S ribosomal protein L15</fullName>
    </alternativeName>
</protein>
<dbReference type="EMBL" id="BA000028">
    <property type="protein sequence ID" value="BAC12094.1"/>
    <property type="molecule type" value="Genomic_DNA"/>
</dbReference>
<dbReference type="RefSeq" id="WP_011064541.1">
    <property type="nucleotide sequence ID" value="NC_004193.1"/>
</dbReference>
<dbReference type="SMR" id="Q8ETW5"/>
<dbReference type="STRING" id="221109.gene:10732328"/>
<dbReference type="KEGG" id="oih:OB0138"/>
<dbReference type="eggNOG" id="COG0200">
    <property type="taxonomic scope" value="Bacteria"/>
</dbReference>
<dbReference type="HOGENOM" id="CLU_055188_4_2_9"/>
<dbReference type="OrthoDB" id="9810293at2"/>
<dbReference type="PhylomeDB" id="Q8ETW5"/>
<dbReference type="Proteomes" id="UP000000822">
    <property type="component" value="Chromosome"/>
</dbReference>
<dbReference type="GO" id="GO:0022625">
    <property type="term" value="C:cytosolic large ribosomal subunit"/>
    <property type="evidence" value="ECO:0007669"/>
    <property type="project" value="TreeGrafter"/>
</dbReference>
<dbReference type="GO" id="GO:0019843">
    <property type="term" value="F:rRNA binding"/>
    <property type="evidence" value="ECO:0007669"/>
    <property type="project" value="UniProtKB-UniRule"/>
</dbReference>
<dbReference type="GO" id="GO:0003735">
    <property type="term" value="F:structural constituent of ribosome"/>
    <property type="evidence" value="ECO:0007669"/>
    <property type="project" value="InterPro"/>
</dbReference>
<dbReference type="GO" id="GO:0006412">
    <property type="term" value="P:translation"/>
    <property type="evidence" value="ECO:0007669"/>
    <property type="project" value="UniProtKB-UniRule"/>
</dbReference>
<dbReference type="FunFam" id="3.100.10.10:FF:000004">
    <property type="entry name" value="50S ribosomal protein L15"/>
    <property type="match status" value="1"/>
</dbReference>
<dbReference type="Gene3D" id="3.100.10.10">
    <property type="match status" value="1"/>
</dbReference>
<dbReference type="HAMAP" id="MF_01341">
    <property type="entry name" value="Ribosomal_uL15"/>
    <property type="match status" value="1"/>
</dbReference>
<dbReference type="InterPro" id="IPR030878">
    <property type="entry name" value="Ribosomal_uL15"/>
</dbReference>
<dbReference type="InterPro" id="IPR021131">
    <property type="entry name" value="Ribosomal_uL15/eL18"/>
</dbReference>
<dbReference type="InterPro" id="IPR036227">
    <property type="entry name" value="Ribosomal_uL15/eL18_sf"/>
</dbReference>
<dbReference type="InterPro" id="IPR005749">
    <property type="entry name" value="Ribosomal_uL15_bac-type"/>
</dbReference>
<dbReference type="InterPro" id="IPR001196">
    <property type="entry name" value="Ribosomal_uL15_CS"/>
</dbReference>
<dbReference type="NCBIfam" id="TIGR01071">
    <property type="entry name" value="rplO_bact"/>
    <property type="match status" value="1"/>
</dbReference>
<dbReference type="PANTHER" id="PTHR12934">
    <property type="entry name" value="50S RIBOSOMAL PROTEIN L15"/>
    <property type="match status" value="1"/>
</dbReference>
<dbReference type="PANTHER" id="PTHR12934:SF11">
    <property type="entry name" value="LARGE RIBOSOMAL SUBUNIT PROTEIN UL15M"/>
    <property type="match status" value="1"/>
</dbReference>
<dbReference type="Pfam" id="PF00828">
    <property type="entry name" value="Ribosomal_L27A"/>
    <property type="match status" value="1"/>
</dbReference>
<dbReference type="SUPFAM" id="SSF52080">
    <property type="entry name" value="Ribosomal proteins L15p and L18e"/>
    <property type="match status" value="1"/>
</dbReference>
<dbReference type="PROSITE" id="PS00475">
    <property type="entry name" value="RIBOSOMAL_L15"/>
    <property type="match status" value="1"/>
</dbReference>
<gene>
    <name evidence="1" type="primary">rplO</name>
    <name type="ordered locus">OB0138</name>
</gene>
<keyword id="KW-1185">Reference proteome</keyword>
<keyword id="KW-0687">Ribonucleoprotein</keyword>
<keyword id="KW-0689">Ribosomal protein</keyword>
<keyword id="KW-0694">RNA-binding</keyword>
<keyword id="KW-0699">rRNA-binding</keyword>